<evidence type="ECO:0000255" key="1">
    <source>
        <dbReference type="HAMAP-Rule" id="MF_00048"/>
    </source>
</evidence>
<comment type="similarity">
    <text evidence="1">Belongs to the UPF0102 family.</text>
</comment>
<dbReference type="EMBL" id="AE017226">
    <property type="protein sequence ID" value="AAS12822.1"/>
    <property type="molecule type" value="Genomic_DNA"/>
</dbReference>
<dbReference type="RefSeq" id="NP_972903.1">
    <property type="nucleotide sequence ID" value="NC_002967.9"/>
</dbReference>
<dbReference type="RefSeq" id="WP_002675753.1">
    <property type="nucleotide sequence ID" value="NC_002967.9"/>
</dbReference>
<dbReference type="SMR" id="Q73KB6"/>
<dbReference type="STRING" id="243275.TDE_2303"/>
<dbReference type="PaxDb" id="243275-TDE_2303"/>
<dbReference type="GeneID" id="2740268"/>
<dbReference type="KEGG" id="tde:TDE_2303"/>
<dbReference type="PATRIC" id="fig|243275.7.peg.2173"/>
<dbReference type="eggNOG" id="COG0792">
    <property type="taxonomic scope" value="Bacteria"/>
</dbReference>
<dbReference type="HOGENOM" id="CLU_115353_3_1_12"/>
<dbReference type="OrthoDB" id="9802516at2"/>
<dbReference type="Proteomes" id="UP000008212">
    <property type="component" value="Chromosome"/>
</dbReference>
<dbReference type="GO" id="GO:0003676">
    <property type="term" value="F:nucleic acid binding"/>
    <property type="evidence" value="ECO:0007669"/>
    <property type="project" value="InterPro"/>
</dbReference>
<dbReference type="Gene3D" id="3.40.1350.10">
    <property type="match status" value="1"/>
</dbReference>
<dbReference type="HAMAP" id="MF_00048">
    <property type="entry name" value="UPF0102"/>
    <property type="match status" value="1"/>
</dbReference>
<dbReference type="InterPro" id="IPR011335">
    <property type="entry name" value="Restrct_endonuc-II-like"/>
</dbReference>
<dbReference type="InterPro" id="IPR011856">
    <property type="entry name" value="tRNA_endonuc-like_dom_sf"/>
</dbReference>
<dbReference type="InterPro" id="IPR003509">
    <property type="entry name" value="UPF0102_YraN-like"/>
</dbReference>
<dbReference type="NCBIfam" id="TIGR00252">
    <property type="entry name" value="YraN family protein"/>
    <property type="match status" value="1"/>
</dbReference>
<dbReference type="PANTHER" id="PTHR34039">
    <property type="entry name" value="UPF0102 PROTEIN YRAN"/>
    <property type="match status" value="1"/>
</dbReference>
<dbReference type="PANTHER" id="PTHR34039:SF1">
    <property type="entry name" value="UPF0102 PROTEIN YRAN"/>
    <property type="match status" value="1"/>
</dbReference>
<dbReference type="Pfam" id="PF02021">
    <property type="entry name" value="UPF0102"/>
    <property type="match status" value="1"/>
</dbReference>
<dbReference type="SUPFAM" id="SSF52980">
    <property type="entry name" value="Restriction endonuclease-like"/>
    <property type="match status" value="1"/>
</dbReference>
<reference key="1">
    <citation type="journal article" date="2004" name="Proc. Natl. Acad. Sci. U.S.A.">
        <title>Comparison of the genome of the oral pathogen Treponema denticola with other spirochete genomes.</title>
        <authorList>
            <person name="Seshadri R."/>
            <person name="Myers G.S.A."/>
            <person name="Tettelin H."/>
            <person name="Eisen J.A."/>
            <person name="Heidelberg J.F."/>
            <person name="Dodson R.J."/>
            <person name="Davidsen T.M."/>
            <person name="DeBoy R.T."/>
            <person name="Fouts D.E."/>
            <person name="Haft D.H."/>
            <person name="Selengut J."/>
            <person name="Ren Q."/>
            <person name="Brinkac L.M."/>
            <person name="Madupu R."/>
            <person name="Kolonay J.F."/>
            <person name="Durkin S.A."/>
            <person name="Daugherty S.C."/>
            <person name="Shetty J."/>
            <person name="Shvartsbeyn A."/>
            <person name="Gebregeorgis E."/>
            <person name="Geer K."/>
            <person name="Tsegaye G."/>
            <person name="Malek J.A."/>
            <person name="Ayodeji B."/>
            <person name="Shatsman S."/>
            <person name="McLeod M.P."/>
            <person name="Smajs D."/>
            <person name="Howell J.K."/>
            <person name="Pal S."/>
            <person name="Amin A."/>
            <person name="Vashisth P."/>
            <person name="McNeill T.Z."/>
            <person name="Xiang Q."/>
            <person name="Sodergren E."/>
            <person name="Baca E."/>
            <person name="Weinstock G.M."/>
            <person name="Norris S.J."/>
            <person name="Fraser C.M."/>
            <person name="Paulsen I.T."/>
        </authorList>
    </citation>
    <scope>NUCLEOTIDE SEQUENCE [LARGE SCALE GENOMIC DNA]</scope>
    <source>
        <strain>ATCC 35405 / DSM 14222 / CIP 103919 / JCM 8153 / KCTC 15104</strain>
    </source>
</reference>
<name>Y2303_TREDE</name>
<feature type="chain" id="PRO_1000071105" description="UPF0102 protein TDE_2303">
    <location>
        <begin position="1"/>
        <end position="130"/>
    </location>
</feature>
<gene>
    <name type="ordered locus">TDE_2303</name>
</gene>
<sequence length="130" mass="15148">MDSLGSKGESRIAEWLTDKDYLILEKNWRTRTGEIDIIALDKTEQTSSGGILVFIEVKTLLKTELSDLDLIINKKKQERIIKTAKHFLANNRKYNKMYIRFDVIVLRSNPFLEQPLEILHLKDAFGDCYD</sequence>
<accession>Q73KB6</accession>
<proteinExistence type="inferred from homology"/>
<keyword id="KW-1185">Reference proteome</keyword>
<organism>
    <name type="scientific">Treponema denticola (strain ATCC 35405 / DSM 14222 / CIP 103919 / JCM 8153 / KCTC 15104)</name>
    <dbReference type="NCBI Taxonomy" id="243275"/>
    <lineage>
        <taxon>Bacteria</taxon>
        <taxon>Pseudomonadati</taxon>
        <taxon>Spirochaetota</taxon>
        <taxon>Spirochaetia</taxon>
        <taxon>Spirochaetales</taxon>
        <taxon>Treponemataceae</taxon>
        <taxon>Treponema</taxon>
    </lineage>
</organism>
<protein>
    <recommendedName>
        <fullName evidence="1">UPF0102 protein TDE_2303</fullName>
    </recommendedName>
</protein>